<dbReference type="EC" id="2.1.1.173" evidence="1"/>
<dbReference type="EC" id="2.1.1.264" evidence="1"/>
<dbReference type="EMBL" id="CP000800">
    <property type="protein sequence ID" value="ABV17299.1"/>
    <property type="molecule type" value="Genomic_DNA"/>
</dbReference>
<dbReference type="SMR" id="A7ZK52"/>
<dbReference type="KEGG" id="ecw:EcE24377A_1063"/>
<dbReference type="HOGENOM" id="CLU_014042_2_0_6"/>
<dbReference type="Proteomes" id="UP000001122">
    <property type="component" value="Chromosome"/>
</dbReference>
<dbReference type="GO" id="GO:0005737">
    <property type="term" value="C:cytoplasm"/>
    <property type="evidence" value="ECO:0007669"/>
    <property type="project" value="UniProtKB-SubCell"/>
</dbReference>
<dbReference type="GO" id="GO:0052915">
    <property type="term" value="F:23S rRNA (guanine(2445)-N(2))-methyltransferase activity"/>
    <property type="evidence" value="ECO:0007669"/>
    <property type="project" value="UniProtKB-UniRule"/>
</dbReference>
<dbReference type="GO" id="GO:0003723">
    <property type="term" value="F:RNA binding"/>
    <property type="evidence" value="ECO:0007669"/>
    <property type="project" value="UniProtKB-KW"/>
</dbReference>
<dbReference type="GO" id="GO:0070043">
    <property type="term" value="F:rRNA (guanine-N7-)-methyltransferase activity"/>
    <property type="evidence" value="ECO:0007669"/>
    <property type="project" value="UniProtKB-UniRule"/>
</dbReference>
<dbReference type="CDD" id="cd02440">
    <property type="entry name" value="AdoMet_MTases"/>
    <property type="match status" value="1"/>
</dbReference>
<dbReference type="CDD" id="cd11715">
    <property type="entry name" value="THUMP_AdoMetMT"/>
    <property type="match status" value="1"/>
</dbReference>
<dbReference type="FunFam" id="3.30.750.80:FF:000001">
    <property type="entry name" value="Ribosomal RNA large subunit methyltransferase K/L"/>
    <property type="match status" value="1"/>
</dbReference>
<dbReference type="FunFam" id="3.40.50.150:FF:000039">
    <property type="entry name" value="Ribosomal RNA large subunit methyltransferase K/L"/>
    <property type="match status" value="1"/>
</dbReference>
<dbReference type="Gene3D" id="3.30.2130.30">
    <property type="match status" value="1"/>
</dbReference>
<dbReference type="Gene3D" id="3.30.750.80">
    <property type="entry name" value="RNA methyltransferase domain (HRMD) like"/>
    <property type="match status" value="1"/>
</dbReference>
<dbReference type="Gene3D" id="3.40.50.150">
    <property type="entry name" value="Vaccinia Virus protein VP39"/>
    <property type="match status" value="2"/>
</dbReference>
<dbReference type="HAMAP" id="MF_01858">
    <property type="entry name" value="23SrRNA_methyltr_KL"/>
    <property type="match status" value="1"/>
</dbReference>
<dbReference type="InterPro" id="IPR017244">
    <property type="entry name" value="23SrRNA_methyltr_KL"/>
</dbReference>
<dbReference type="InterPro" id="IPR002052">
    <property type="entry name" value="DNA_methylase_N6_adenine_CS"/>
</dbReference>
<dbReference type="InterPro" id="IPR000241">
    <property type="entry name" value="RlmKL-like_Mtase"/>
</dbReference>
<dbReference type="InterPro" id="IPR053943">
    <property type="entry name" value="RlmKL-like_Mtase_CS"/>
</dbReference>
<dbReference type="InterPro" id="IPR054170">
    <property type="entry name" value="RlmL_1st"/>
</dbReference>
<dbReference type="InterPro" id="IPR019614">
    <property type="entry name" value="SAM-dep_methyl-trfase"/>
</dbReference>
<dbReference type="InterPro" id="IPR029063">
    <property type="entry name" value="SAM-dependent_MTases_sf"/>
</dbReference>
<dbReference type="InterPro" id="IPR004114">
    <property type="entry name" value="THUMP_dom"/>
</dbReference>
<dbReference type="NCBIfam" id="NF008748">
    <property type="entry name" value="PRK11783.1"/>
    <property type="match status" value="1"/>
</dbReference>
<dbReference type="PANTHER" id="PTHR47313">
    <property type="entry name" value="RIBOSOMAL RNA LARGE SUBUNIT METHYLTRANSFERASE K/L"/>
    <property type="match status" value="1"/>
</dbReference>
<dbReference type="PANTHER" id="PTHR47313:SF1">
    <property type="entry name" value="RIBOSOMAL RNA LARGE SUBUNIT METHYLTRANSFERASE K_L"/>
    <property type="match status" value="1"/>
</dbReference>
<dbReference type="Pfam" id="PF10672">
    <property type="entry name" value="Methyltrans_SAM"/>
    <property type="match status" value="1"/>
</dbReference>
<dbReference type="Pfam" id="PF22020">
    <property type="entry name" value="RlmL_1st"/>
    <property type="match status" value="1"/>
</dbReference>
<dbReference type="Pfam" id="PF02926">
    <property type="entry name" value="THUMP"/>
    <property type="match status" value="1"/>
</dbReference>
<dbReference type="Pfam" id="PF01170">
    <property type="entry name" value="UPF0020"/>
    <property type="match status" value="1"/>
</dbReference>
<dbReference type="PIRSF" id="PIRSF037618">
    <property type="entry name" value="RNA_Mtase_bacteria_prd"/>
    <property type="match status" value="1"/>
</dbReference>
<dbReference type="PRINTS" id="PR00507">
    <property type="entry name" value="N12N6MTFRASE"/>
</dbReference>
<dbReference type="SMART" id="SM00981">
    <property type="entry name" value="THUMP"/>
    <property type="match status" value="1"/>
</dbReference>
<dbReference type="SUPFAM" id="SSF53335">
    <property type="entry name" value="S-adenosyl-L-methionine-dependent methyltransferases"/>
    <property type="match status" value="2"/>
</dbReference>
<dbReference type="PROSITE" id="PS51165">
    <property type="entry name" value="THUMP"/>
    <property type="match status" value="1"/>
</dbReference>
<dbReference type="PROSITE" id="PS01261">
    <property type="entry name" value="UPF0020"/>
    <property type="match status" value="1"/>
</dbReference>
<organism>
    <name type="scientific">Escherichia coli O139:H28 (strain E24377A / ETEC)</name>
    <dbReference type="NCBI Taxonomy" id="331111"/>
    <lineage>
        <taxon>Bacteria</taxon>
        <taxon>Pseudomonadati</taxon>
        <taxon>Pseudomonadota</taxon>
        <taxon>Gammaproteobacteria</taxon>
        <taxon>Enterobacterales</taxon>
        <taxon>Enterobacteriaceae</taxon>
        <taxon>Escherichia</taxon>
    </lineage>
</organism>
<sequence>MNSLFASTARGLEELLKTELENLGAVECQVVQGGVHFKGDTRLVYQSLMWSRLASRIMLPLGECKVYSDLDLYLGVQAINWTEMFNPGATFAVHFSGLNDTIRNSQYGAMKVKDAIVDAFTRKNLPRPNVDRDAPDIRVNVWLHKETASIALDLSGDGLHLRGYRDRAGIAPIKETLAAAIVMRSGWQPGTPLLDPMCGSGTLLIEAAMLATDRAPGLHRGRWGFSGWAQHDEAIWQEVKAEAQTRARKGLAEYSSHFYGSDSDARVIQRARTNARLAGIGELITFEVKDVAQLTNPLPKGPYGTVLSNPPYGERLDSEPALIALHSLLGRIMKNQFGGWNLSLFSASPDLLSCLQLRADKQYKAKNGPLDCVQKNYHVAESTPDSKPAMVAEDYANRLRKNLKKFEKWARQEGIECYRLYDADLPEYNVAVDRYADWVVVQEYAPPKTIDAHKARQRLFDIIAATISVLGIAPNKLVLKTRERQKGKNQYQKLGEKGEFLEVTEYNAHLLVNLTDYLDTGLFLDHRIARRMLGQMSKGKDFLNLFSYTGSATVHAGLGGARSTTTVDMSRTYLEWAERNLRLNGLTGRAHRLIQADCLAWLREANEQFDLIFIDPPTFSNSKRMEDAFDVQRDHLALMKDLKRLLRAGGTIMFSNNKRGFRMDLDGLAKLGLKAQEITQKTLSQDFARNRQIHNCWLITAA</sequence>
<protein>
    <recommendedName>
        <fullName evidence="1">Ribosomal RNA large subunit methyltransferase K/L</fullName>
    </recommendedName>
    <domain>
        <recommendedName>
            <fullName evidence="1">23S rRNA m2G2445 methyltransferase</fullName>
            <ecNumber evidence="1">2.1.1.173</ecNumber>
        </recommendedName>
        <alternativeName>
            <fullName evidence="1">rRNA (guanine-N(2)-)-methyltransferase RlmL</fullName>
        </alternativeName>
    </domain>
    <domain>
        <recommendedName>
            <fullName evidence="1">23S rRNA m7G2069 methyltransferase</fullName>
            <ecNumber evidence="1">2.1.1.264</ecNumber>
        </recommendedName>
        <alternativeName>
            <fullName evidence="1">rRNA (guanine-N(7)-)-methyltransferase RlmK</fullName>
        </alternativeName>
    </domain>
</protein>
<keyword id="KW-0963">Cytoplasm</keyword>
<keyword id="KW-0489">Methyltransferase</keyword>
<keyword id="KW-1185">Reference proteome</keyword>
<keyword id="KW-0694">RNA-binding</keyword>
<keyword id="KW-0698">rRNA processing</keyword>
<keyword id="KW-0949">S-adenosyl-L-methionine</keyword>
<keyword id="KW-0808">Transferase</keyword>
<evidence type="ECO:0000255" key="1">
    <source>
        <dbReference type="HAMAP-Rule" id="MF_01858"/>
    </source>
</evidence>
<name>RLMKL_ECO24</name>
<accession>A7ZK52</accession>
<gene>
    <name evidence="1" type="primary">rlmL</name>
    <name type="ordered locus">EcE24377A_1063</name>
</gene>
<proteinExistence type="inferred from homology"/>
<reference key="1">
    <citation type="journal article" date="2008" name="J. Bacteriol.">
        <title>The pangenome structure of Escherichia coli: comparative genomic analysis of E. coli commensal and pathogenic isolates.</title>
        <authorList>
            <person name="Rasko D.A."/>
            <person name="Rosovitz M.J."/>
            <person name="Myers G.S.A."/>
            <person name="Mongodin E.F."/>
            <person name="Fricke W.F."/>
            <person name="Gajer P."/>
            <person name="Crabtree J."/>
            <person name="Sebaihia M."/>
            <person name="Thomson N.R."/>
            <person name="Chaudhuri R."/>
            <person name="Henderson I.R."/>
            <person name="Sperandio V."/>
            <person name="Ravel J."/>
        </authorList>
    </citation>
    <scope>NUCLEOTIDE SEQUENCE [LARGE SCALE GENOMIC DNA]</scope>
    <source>
        <strain>E24377A / ETEC</strain>
    </source>
</reference>
<feature type="chain" id="PRO_0000366743" description="Ribosomal RNA large subunit methyltransferase K/L">
    <location>
        <begin position="1"/>
        <end position="702"/>
    </location>
</feature>
<feature type="domain" description="THUMP" evidence="1">
    <location>
        <begin position="43"/>
        <end position="154"/>
    </location>
</feature>
<comment type="function">
    <text evidence="1">Specifically methylates the guanine in position 2445 (m2G2445) and the guanine in position 2069 (m7G2069) of 23S rRNA.</text>
</comment>
<comment type="catalytic activity">
    <reaction evidence="1">
        <text>guanosine(2445) in 23S rRNA + S-adenosyl-L-methionine = N(2)-methylguanosine(2445) in 23S rRNA + S-adenosyl-L-homocysteine + H(+)</text>
        <dbReference type="Rhea" id="RHEA:42740"/>
        <dbReference type="Rhea" id="RHEA-COMP:10215"/>
        <dbReference type="Rhea" id="RHEA-COMP:10216"/>
        <dbReference type="ChEBI" id="CHEBI:15378"/>
        <dbReference type="ChEBI" id="CHEBI:57856"/>
        <dbReference type="ChEBI" id="CHEBI:59789"/>
        <dbReference type="ChEBI" id="CHEBI:74269"/>
        <dbReference type="ChEBI" id="CHEBI:74481"/>
        <dbReference type="EC" id="2.1.1.173"/>
    </reaction>
</comment>
<comment type="catalytic activity">
    <reaction evidence="1">
        <text>guanosine(2069) in 23S rRNA + S-adenosyl-L-methionine = N(2)-methylguanosine(2069) in 23S rRNA + S-adenosyl-L-homocysteine + H(+)</text>
        <dbReference type="Rhea" id="RHEA:43772"/>
        <dbReference type="Rhea" id="RHEA-COMP:10688"/>
        <dbReference type="Rhea" id="RHEA-COMP:10689"/>
        <dbReference type="ChEBI" id="CHEBI:15378"/>
        <dbReference type="ChEBI" id="CHEBI:57856"/>
        <dbReference type="ChEBI" id="CHEBI:59789"/>
        <dbReference type="ChEBI" id="CHEBI:74269"/>
        <dbReference type="ChEBI" id="CHEBI:74481"/>
        <dbReference type="EC" id="2.1.1.264"/>
    </reaction>
</comment>
<comment type="subcellular location">
    <subcellularLocation>
        <location evidence="1">Cytoplasm</location>
    </subcellularLocation>
</comment>
<comment type="similarity">
    <text evidence="1">Belongs to the methyltransferase superfamily. RlmKL family.</text>
</comment>